<proteinExistence type="evidence at protein level"/>
<comment type="function">
    <text evidence="2 5">Negatively regulates endocycles and acts as a regulator of ploidy levels in endoreduplication (PubMed:16415207). Promotes divisions in the guard cells (GCs) after the guard mother cells (GMC) symmetric division (PubMed:24687979).</text>
</comment>
<comment type="subunit">
    <text evidence="2 4">Interacts with CDKA-1 (PubMed:16415207). Interacts with SAMBA (PubMed:22869741).</text>
</comment>
<comment type="interaction">
    <interactant intactId="EBI-1781564">
        <id>Q38819</id>
    </interactant>
    <interactant intactId="EBI-25519283">
        <id>A0A384L704</id>
        <label>AXX17_At3g12770</label>
    </interactant>
    <organismsDiffer>false</organismsDiffer>
    <experiments>3</experiments>
</comment>
<comment type="subcellular location">
    <subcellularLocation>
        <location evidence="2">Nucleus</location>
    </subcellularLocation>
</comment>
<comment type="induction">
    <text evidence="3">Repressed by MYB88 and MYB124 in newly formed guard cells.</text>
</comment>
<comment type="similarity">
    <text evidence="6">Belongs to the cyclin family. Cyclin AB subfamily.</text>
</comment>
<comment type="sequence caution" evidence="6">
    <conflict type="erroneous gene model prediction">
        <sequence resource="EMBL-CDS" id="AAF71982"/>
    </conflict>
</comment>
<protein>
    <recommendedName>
        <fullName>Cyclin-A2-3</fullName>
    </recommendedName>
    <alternativeName>
        <fullName>Cyc3c-At</fullName>
    </alternativeName>
    <alternativeName>
        <fullName>Cyclin-3c</fullName>
    </alternativeName>
    <alternativeName>
        <fullName>G2/mitotic-specific cyclin-A2-3</fullName>
        <shortName>CycA2;3</shortName>
    </alternativeName>
</protein>
<dbReference type="EMBL" id="AC013453">
    <property type="protein sequence ID" value="AAF71982.1"/>
    <property type="status" value="ALT_SEQ"/>
    <property type="molecule type" value="Genomic_DNA"/>
</dbReference>
<dbReference type="EMBL" id="CP002684">
    <property type="protein sequence ID" value="AEE29336.1"/>
    <property type="molecule type" value="Genomic_DNA"/>
</dbReference>
<dbReference type="EMBL" id="AY072105">
    <property type="protein sequence ID" value="AAL59927.1"/>
    <property type="molecule type" value="mRNA"/>
</dbReference>
<dbReference type="EMBL" id="AY096733">
    <property type="protein sequence ID" value="AAM20367.1"/>
    <property type="molecule type" value="mRNA"/>
</dbReference>
<dbReference type="EMBL" id="U17890">
    <property type="protein sequence ID" value="AAA90946.1"/>
    <property type="molecule type" value="mRNA"/>
</dbReference>
<dbReference type="PIR" id="F86289">
    <property type="entry name" value="F86289"/>
</dbReference>
<dbReference type="PIR" id="S71193">
    <property type="entry name" value="S71193"/>
</dbReference>
<dbReference type="RefSeq" id="NP_173010.1">
    <property type="nucleotide sequence ID" value="NM_101426.5"/>
</dbReference>
<dbReference type="SMR" id="Q38819"/>
<dbReference type="BioGRID" id="23367">
    <property type="interactions" value="32"/>
</dbReference>
<dbReference type="FunCoup" id="Q38819">
    <property type="interactions" value="2001"/>
</dbReference>
<dbReference type="IntAct" id="Q38819">
    <property type="interactions" value="26"/>
</dbReference>
<dbReference type="STRING" id="3702.Q38819"/>
<dbReference type="iPTMnet" id="Q38819"/>
<dbReference type="PaxDb" id="3702-AT1G15570.1"/>
<dbReference type="EnsemblPlants" id="AT1G15570.1">
    <property type="protein sequence ID" value="AT1G15570.1"/>
    <property type="gene ID" value="AT1G15570"/>
</dbReference>
<dbReference type="GeneID" id="838127"/>
<dbReference type="Gramene" id="AT1G15570.1">
    <property type="protein sequence ID" value="AT1G15570.1"/>
    <property type="gene ID" value="AT1G15570"/>
</dbReference>
<dbReference type="KEGG" id="ath:AT1G15570"/>
<dbReference type="Araport" id="AT1G15570"/>
<dbReference type="TAIR" id="AT1G15570">
    <property type="gene designation" value="CYCA2"/>
</dbReference>
<dbReference type="eggNOG" id="KOG0654">
    <property type="taxonomic scope" value="Eukaryota"/>
</dbReference>
<dbReference type="HOGENOM" id="CLU_020695_13_3_1"/>
<dbReference type="InParanoid" id="Q38819"/>
<dbReference type="OMA" id="CIEKWNF"/>
<dbReference type="OrthoDB" id="5590282at2759"/>
<dbReference type="PhylomeDB" id="Q38819"/>
<dbReference type="PRO" id="PR:Q38819"/>
<dbReference type="Proteomes" id="UP000006548">
    <property type="component" value="Chromosome 1"/>
</dbReference>
<dbReference type="ExpressionAtlas" id="Q38819">
    <property type="expression patterns" value="baseline and differential"/>
</dbReference>
<dbReference type="GO" id="GO:0005634">
    <property type="term" value="C:nucleus"/>
    <property type="evidence" value="ECO:0000314"/>
    <property type="project" value="TAIR"/>
</dbReference>
<dbReference type="GO" id="GO:0016538">
    <property type="term" value="F:cyclin-dependent protein serine/threonine kinase regulator activity"/>
    <property type="evidence" value="ECO:0007669"/>
    <property type="project" value="InterPro"/>
</dbReference>
<dbReference type="GO" id="GO:0044839">
    <property type="term" value="P:cell cycle G2/M phase transition"/>
    <property type="evidence" value="ECO:0000316"/>
    <property type="project" value="TAIR"/>
</dbReference>
<dbReference type="GO" id="GO:0051301">
    <property type="term" value="P:cell division"/>
    <property type="evidence" value="ECO:0007669"/>
    <property type="project" value="UniProtKB-KW"/>
</dbReference>
<dbReference type="GO" id="GO:0042023">
    <property type="term" value="P:DNA endoreduplication"/>
    <property type="evidence" value="ECO:0000315"/>
    <property type="project" value="TAIR"/>
</dbReference>
<dbReference type="GO" id="GO:0010444">
    <property type="term" value="P:guard mother cell differentiation"/>
    <property type="evidence" value="ECO:0000315"/>
    <property type="project" value="UniProtKB"/>
</dbReference>
<dbReference type="GO" id="GO:0010311">
    <property type="term" value="P:lateral root formation"/>
    <property type="evidence" value="ECO:0000316"/>
    <property type="project" value="TAIR"/>
</dbReference>
<dbReference type="GO" id="GO:0044772">
    <property type="term" value="P:mitotic cell cycle phase transition"/>
    <property type="evidence" value="ECO:0007669"/>
    <property type="project" value="InterPro"/>
</dbReference>
<dbReference type="GO" id="GO:2000123">
    <property type="term" value="P:positive regulation of stomatal complex development"/>
    <property type="evidence" value="ECO:0000316"/>
    <property type="project" value="TAIR"/>
</dbReference>
<dbReference type="GO" id="GO:0010389">
    <property type="term" value="P:regulation of G2/M transition of mitotic cell cycle"/>
    <property type="evidence" value="ECO:0000316"/>
    <property type="project" value="TAIR"/>
</dbReference>
<dbReference type="CDD" id="cd20506">
    <property type="entry name" value="CYCLIN_AtCycA-like_rpt2"/>
    <property type="match status" value="1"/>
</dbReference>
<dbReference type="CDD" id="cd20562">
    <property type="entry name" value="CYCLIN_AtCycA_like_rpt1"/>
    <property type="match status" value="1"/>
</dbReference>
<dbReference type="FunFam" id="1.10.472.10:FF:000013">
    <property type="entry name" value="Cyclin A1"/>
    <property type="match status" value="1"/>
</dbReference>
<dbReference type="FunFam" id="1.10.472.10:FF:000167">
    <property type="entry name" value="Mitotic cyclin 6"/>
    <property type="match status" value="1"/>
</dbReference>
<dbReference type="Gene3D" id="1.10.472.10">
    <property type="entry name" value="Cyclin-like"/>
    <property type="match status" value="2"/>
</dbReference>
<dbReference type="InterPro" id="IPR039361">
    <property type="entry name" value="Cyclin"/>
</dbReference>
<dbReference type="InterPro" id="IPR013763">
    <property type="entry name" value="Cyclin-like_dom"/>
</dbReference>
<dbReference type="InterPro" id="IPR036915">
    <property type="entry name" value="Cyclin-like_sf"/>
</dbReference>
<dbReference type="InterPro" id="IPR046965">
    <property type="entry name" value="Cyclin_A/B-like"/>
</dbReference>
<dbReference type="InterPro" id="IPR004367">
    <property type="entry name" value="Cyclin_C-dom"/>
</dbReference>
<dbReference type="InterPro" id="IPR006671">
    <property type="entry name" value="Cyclin_N"/>
</dbReference>
<dbReference type="PANTHER" id="PTHR10177">
    <property type="entry name" value="CYCLINS"/>
    <property type="match status" value="1"/>
</dbReference>
<dbReference type="Pfam" id="PF02984">
    <property type="entry name" value="Cyclin_C"/>
    <property type="match status" value="1"/>
</dbReference>
<dbReference type="Pfam" id="PF00134">
    <property type="entry name" value="Cyclin_N"/>
    <property type="match status" value="1"/>
</dbReference>
<dbReference type="PIRSF" id="PIRSF001771">
    <property type="entry name" value="Cyclin_A_B_D_E"/>
    <property type="match status" value="1"/>
</dbReference>
<dbReference type="SMART" id="SM00385">
    <property type="entry name" value="CYCLIN"/>
    <property type="match status" value="2"/>
</dbReference>
<dbReference type="SMART" id="SM01332">
    <property type="entry name" value="Cyclin_C"/>
    <property type="match status" value="1"/>
</dbReference>
<dbReference type="SUPFAM" id="SSF47954">
    <property type="entry name" value="Cyclin-like"/>
    <property type="match status" value="2"/>
</dbReference>
<reference key="1">
    <citation type="journal article" date="2000" name="Nature">
        <title>Sequence and analysis of chromosome 1 of the plant Arabidopsis thaliana.</title>
        <authorList>
            <person name="Theologis A."/>
            <person name="Ecker J.R."/>
            <person name="Palm C.J."/>
            <person name="Federspiel N.A."/>
            <person name="Kaul S."/>
            <person name="White O."/>
            <person name="Alonso J."/>
            <person name="Altafi H."/>
            <person name="Araujo R."/>
            <person name="Bowman C.L."/>
            <person name="Brooks S.Y."/>
            <person name="Buehler E."/>
            <person name="Chan A."/>
            <person name="Chao Q."/>
            <person name="Chen H."/>
            <person name="Cheuk R.F."/>
            <person name="Chin C.W."/>
            <person name="Chung M.K."/>
            <person name="Conn L."/>
            <person name="Conway A.B."/>
            <person name="Conway A.R."/>
            <person name="Creasy T.H."/>
            <person name="Dewar K."/>
            <person name="Dunn P."/>
            <person name="Etgu P."/>
            <person name="Feldblyum T.V."/>
            <person name="Feng J.-D."/>
            <person name="Fong B."/>
            <person name="Fujii C.Y."/>
            <person name="Gill J.E."/>
            <person name="Goldsmith A.D."/>
            <person name="Haas B."/>
            <person name="Hansen N.F."/>
            <person name="Hughes B."/>
            <person name="Huizar L."/>
            <person name="Hunter J.L."/>
            <person name="Jenkins J."/>
            <person name="Johnson-Hopson C."/>
            <person name="Khan S."/>
            <person name="Khaykin E."/>
            <person name="Kim C.J."/>
            <person name="Koo H.L."/>
            <person name="Kremenetskaia I."/>
            <person name="Kurtz D.B."/>
            <person name="Kwan A."/>
            <person name="Lam B."/>
            <person name="Langin-Hooper S."/>
            <person name="Lee A."/>
            <person name="Lee J.M."/>
            <person name="Lenz C.A."/>
            <person name="Li J.H."/>
            <person name="Li Y.-P."/>
            <person name="Lin X."/>
            <person name="Liu S.X."/>
            <person name="Liu Z.A."/>
            <person name="Luros J.S."/>
            <person name="Maiti R."/>
            <person name="Marziali A."/>
            <person name="Militscher J."/>
            <person name="Miranda M."/>
            <person name="Nguyen M."/>
            <person name="Nierman W.C."/>
            <person name="Osborne B.I."/>
            <person name="Pai G."/>
            <person name="Peterson J."/>
            <person name="Pham P.K."/>
            <person name="Rizzo M."/>
            <person name="Rooney T."/>
            <person name="Rowley D."/>
            <person name="Sakano H."/>
            <person name="Salzberg S.L."/>
            <person name="Schwartz J.R."/>
            <person name="Shinn P."/>
            <person name="Southwick A.M."/>
            <person name="Sun H."/>
            <person name="Tallon L.J."/>
            <person name="Tambunga G."/>
            <person name="Toriumi M.J."/>
            <person name="Town C.D."/>
            <person name="Utterback T."/>
            <person name="Van Aken S."/>
            <person name="Vaysberg M."/>
            <person name="Vysotskaia V.S."/>
            <person name="Walker M."/>
            <person name="Wu D."/>
            <person name="Yu G."/>
            <person name="Fraser C.M."/>
            <person name="Venter J.C."/>
            <person name="Davis R.W."/>
        </authorList>
    </citation>
    <scope>NUCLEOTIDE SEQUENCE [LARGE SCALE GENOMIC DNA]</scope>
    <source>
        <strain>cv. Columbia</strain>
    </source>
</reference>
<reference key="2">
    <citation type="journal article" date="2017" name="Plant J.">
        <title>Araport11: a complete reannotation of the Arabidopsis thaliana reference genome.</title>
        <authorList>
            <person name="Cheng C.Y."/>
            <person name="Krishnakumar V."/>
            <person name="Chan A.P."/>
            <person name="Thibaud-Nissen F."/>
            <person name="Schobel S."/>
            <person name="Town C.D."/>
        </authorList>
    </citation>
    <scope>GENOME REANNOTATION</scope>
    <source>
        <strain>cv. Columbia</strain>
    </source>
</reference>
<reference key="3">
    <citation type="journal article" date="2003" name="Science">
        <title>Empirical analysis of transcriptional activity in the Arabidopsis genome.</title>
        <authorList>
            <person name="Yamada K."/>
            <person name="Lim J."/>
            <person name="Dale J.M."/>
            <person name="Chen H."/>
            <person name="Shinn P."/>
            <person name="Palm C.J."/>
            <person name="Southwick A.M."/>
            <person name="Wu H.C."/>
            <person name="Kim C.J."/>
            <person name="Nguyen M."/>
            <person name="Pham P.K."/>
            <person name="Cheuk R.F."/>
            <person name="Karlin-Newmann G."/>
            <person name="Liu S.X."/>
            <person name="Lam B."/>
            <person name="Sakano H."/>
            <person name="Wu T."/>
            <person name="Yu G."/>
            <person name="Miranda M."/>
            <person name="Quach H.L."/>
            <person name="Tripp M."/>
            <person name="Chang C.H."/>
            <person name="Lee J.M."/>
            <person name="Toriumi M.J."/>
            <person name="Chan M.M."/>
            <person name="Tang C.C."/>
            <person name="Onodera C.S."/>
            <person name="Deng J.M."/>
            <person name="Akiyama K."/>
            <person name="Ansari Y."/>
            <person name="Arakawa T."/>
            <person name="Banh J."/>
            <person name="Banno F."/>
            <person name="Bowser L."/>
            <person name="Brooks S.Y."/>
            <person name="Carninci P."/>
            <person name="Chao Q."/>
            <person name="Choy N."/>
            <person name="Enju A."/>
            <person name="Goldsmith A.D."/>
            <person name="Gurjal M."/>
            <person name="Hansen N.F."/>
            <person name="Hayashizaki Y."/>
            <person name="Johnson-Hopson C."/>
            <person name="Hsuan V.W."/>
            <person name="Iida K."/>
            <person name="Karnes M."/>
            <person name="Khan S."/>
            <person name="Koesema E."/>
            <person name="Ishida J."/>
            <person name="Jiang P.X."/>
            <person name="Jones T."/>
            <person name="Kawai J."/>
            <person name="Kamiya A."/>
            <person name="Meyers C."/>
            <person name="Nakajima M."/>
            <person name="Narusaka M."/>
            <person name="Seki M."/>
            <person name="Sakurai T."/>
            <person name="Satou M."/>
            <person name="Tamse R."/>
            <person name="Vaysberg M."/>
            <person name="Wallender E.K."/>
            <person name="Wong C."/>
            <person name="Yamamura Y."/>
            <person name="Yuan S."/>
            <person name="Shinozaki K."/>
            <person name="Davis R.W."/>
            <person name="Theologis A."/>
            <person name="Ecker J.R."/>
        </authorList>
    </citation>
    <scope>NUCLEOTIDE SEQUENCE [LARGE SCALE MRNA]</scope>
    <source>
        <strain>cv. Columbia</strain>
    </source>
</reference>
<reference key="4">
    <citation type="submission" date="1994-11" db="EMBL/GenBank/DDBJ databases">
        <title>An Arabidopsis cDNA clone encoding cyclin.</title>
        <authorList>
            <person name="Lu G."/>
            <person name="Ferl R.J."/>
        </authorList>
    </citation>
    <scope>NUCLEOTIDE SEQUENCE [MRNA] OF 224-450</scope>
    <source>
        <strain>cv. Columbia</strain>
    </source>
</reference>
<reference key="5">
    <citation type="journal article" date="2004" name="Plant Physiol.">
        <title>Genome-wide analysis of the cyclin family in Arabidopsis and comparative phylogenetic analysis of plant cyclin-like proteins.</title>
        <authorList>
            <person name="Wang G."/>
            <person name="Kong H."/>
            <person name="Sun Y."/>
            <person name="Zhang X."/>
            <person name="Zhang W."/>
            <person name="Altman N."/>
            <person name="dePamphilis C.W."/>
            <person name="Ma H."/>
        </authorList>
    </citation>
    <scope>GENE FAMILY</scope>
    <scope>NOMENCLATURE</scope>
</reference>
<reference key="6">
    <citation type="journal article" date="2006" name="Plant Cell">
        <title>The A-type cyclin CYCA2;3 is a key regulator of ploidy levels in Arabidopsis endoreduplication.</title>
        <authorList>
            <person name="Imai K.K."/>
            <person name="Ohashi Y."/>
            <person name="Tsuge T."/>
            <person name="Yoshizumi T."/>
            <person name="Matsui M."/>
            <person name="Oka A."/>
            <person name="Aoyama T."/>
        </authorList>
    </citation>
    <scope>FUNCTION</scope>
    <scope>SUBCELLULAR LOCATION</scope>
    <scope>INTERACTION WITH CDKA-1</scope>
</reference>
<reference key="7">
    <citation type="journal article" date="2011" name="EMBO J.">
        <title>Developmental regulation of CYCA2s contributes to tissue-specific proliferation in Arabidopsis.</title>
        <authorList>
            <person name="Vanneste S."/>
            <person name="Coppens F."/>
            <person name="Lee E."/>
            <person name="Donner T.J."/>
            <person name="Xie Z."/>
            <person name="Van Isterdael G."/>
            <person name="Dhondt S."/>
            <person name="De Winter F."/>
            <person name="De Rybel B."/>
            <person name="Vuylsteke M."/>
            <person name="De Veylder L."/>
            <person name="Friml J."/>
            <person name="Inze D."/>
            <person name="Grotewold E."/>
            <person name="Scarpella E."/>
            <person name="Sack F."/>
            <person name="Beemster G.T."/>
            <person name="Beeckman T."/>
        </authorList>
    </citation>
    <scope>REGULATION BY MYB88 AND MYB124</scope>
</reference>
<reference key="8">
    <citation type="journal article" date="2012" name="Proc. Natl. Acad. Sci. U.S.A.">
        <title>SAMBA, a plant-specific anaphase-promoting complex/cyclosome regulator is involved in early development and A-type cyclin stabilization.</title>
        <authorList>
            <person name="Eloy N.B."/>
            <person name="Gonzalez N."/>
            <person name="Van Leene J."/>
            <person name="Maleux K."/>
            <person name="Vanhaeren H."/>
            <person name="De Milde L."/>
            <person name="Dhondt S."/>
            <person name="Vercruysse L."/>
            <person name="Witters E."/>
            <person name="Mercier R."/>
            <person name="Cromer L."/>
            <person name="Beemster G.T."/>
            <person name="Remaut H."/>
            <person name="Van Montagu M.C."/>
            <person name="De Jaeger G."/>
            <person name="Ferreira P.C."/>
            <person name="Inze D."/>
        </authorList>
    </citation>
    <scope>INTERACTION WITH SAMBA</scope>
</reference>
<reference key="9">
    <citation type="journal article" date="2014" name="J. Exp. Bot.">
        <title>Requirement for A-type cyclin-dependent kinase and cyclins for the terminal division in the stomatal lineage of Arabidopsis.</title>
        <authorList>
            <person name="Yang K."/>
            <person name="Wang H."/>
            <person name="Xue S."/>
            <person name="Qu X."/>
            <person name="Zou J."/>
            <person name="Le J."/>
        </authorList>
    </citation>
    <scope>FUNCTION</scope>
    <source>
        <strain>cv. Columbia</strain>
    </source>
</reference>
<accession>Q38819</accession>
<accession>Q8VYG1</accession>
<accession>Q9M9D7</accession>
<feature type="chain" id="PRO_0000286995" description="Cyclin-A2-3">
    <location>
        <begin position="1"/>
        <end position="450"/>
    </location>
</feature>
<feature type="region of interest" description="Disordered" evidence="1">
    <location>
        <begin position="18"/>
        <end position="53"/>
    </location>
</feature>
<feature type="region of interest" description="Disordered" evidence="1">
    <location>
        <begin position="75"/>
        <end position="94"/>
    </location>
</feature>
<feature type="compositionally biased region" description="Polar residues" evidence="1">
    <location>
        <begin position="23"/>
        <end position="34"/>
    </location>
</feature>
<feature type="sequence conflict" description="In Ref. 4; AAA90946." evidence="6" ref="4">
    <original>R</original>
    <variation>E</variation>
    <location>
        <position position="299"/>
    </location>
</feature>
<feature type="sequence conflict" description="In Ref. 4; AAA90946." evidence="6" ref="4">
    <original>F</original>
    <variation>S</variation>
    <location>
        <position position="325"/>
    </location>
</feature>
<feature type="sequence conflict" description="In Ref. 4; AAA90946." evidence="6" ref="4">
    <original>E</original>
    <variation>G</variation>
    <location>
        <position position="343"/>
    </location>
</feature>
<feature type="sequence conflict" description="In Ref. 4; AAA90946." evidence="6" ref="4">
    <original>T</original>
    <variation>A</variation>
    <location>
        <position position="355"/>
    </location>
</feature>
<feature type="sequence conflict" description="In Ref. 4; AAA90946." evidence="6" ref="4">
    <original>Y</original>
    <variation>C</variation>
    <location>
        <position position="359"/>
    </location>
</feature>
<feature type="sequence conflict" description="In Ref. 4; AAA90946." evidence="6" ref="4">
    <original>N</original>
    <variation>T</variation>
    <location>
        <position position="385"/>
    </location>
</feature>
<feature type="sequence conflict" description="In Ref. 4; AAA90946." evidence="6" ref="4">
    <original>E</original>
    <variation>D</variation>
    <location>
        <position position="393"/>
    </location>
</feature>
<feature type="sequence conflict" description="In Ref. 4; AAA90946." evidence="6" ref="4">
    <original>A</original>
    <variation>P</variation>
    <location>
        <position position="400"/>
    </location>
</feature>
<gene>
    <name type="primary">CYCA2-3</name>
    <name type="synonym">CYC3C</name>
    <name type="ordered locus">At1g15570</name>
    <name type="ORF">T16N11.8</name>
</gene>
<name>CCA23_ARATH</name>
<sequence>MGKENAVSRPFTRSLASALRASEVTSTTQNQQRVNTKRPALEDTRATGPNKRKKRAVLGEITNVNSNTAILEAKNSKQIKKGRGHGLASTSQLATSVTSEVTDLQSRTDAKVEVASNTAGNLSVSKGTDNTADNCIEIWNSRLPPRPLGRSASTAEKSAVIGSSTVPDIPKFVDIDSDDKDPLLCCLYAPEIHYNLRVSELKRRPLPDFMERIQKDVTQSMRGILVDWLVEVSEEYTLASDTLYLTVYLIDWFLHGNYVQRQQLQLLGITCMLIASKYEEISAPRIEEFCFITDNTYTRDQVLEMENQVLKHFSFQIYTPTPKTFLRRFLRAAQASRLSPSLEVEFLASYLTELTLIDYHFLKFLPSVVAASAVFLAKWTMDQSNHPWNPTLEHYTTYKASDLKASVHALQDLQLNTKGCPLSAIRMKYRQEKYKSVAVLTSPKLLDTLF</sequence>
<evidence type="ECO:0000256" key="1">
    <source>
        <dbReference type="SAM" id="MobiDB-lite"/>
    </source>
</evidence>
<evidence type="ECO:0000269" key="2">
    <source>
    </source>
</evidence>
<evidence type="ECO:0000269" key="3">
    <source>
    </source>
</evidence>
<evidence type="ECO:0000269" key="4">
    <source>
    </source>
</evidence>
<evidence type="ECO:0000269" key="5">
    <source>
    </source>
</evidence>
<evidence type="ECO:0000305" key="6"/>
<keyword id="KW-0131">Cell cycle</keyword>
<keyword id="KW-0132">Cell division</keyword>
<keyword id="KW-0195">Cyclin</keyword>
<keyword id="KW-0539">Nucleus</keyword>
<keyword id="KW-1185">Reference proteome</keyword>
<organism>
    <name type="scientific">Arabidopsis thaliana</name>
    <name type="common">Mouse-ear cress</name>
    <dbReference type="NCBI Taxonomy" id="3702"/>
    <lineage>
        <taxon>Eukaryota</taxon>
        <taxon>Viridiplantae</taxon>
        <taxon>Streptophyta</taxon>
        <taxon>Embryophyta</taxon>
        <taxon>Tracheophyta</taxon>
        <taxon>Spermatophyta</taxon>
        <taxon>Magnoliopsida</taxon>
        <taxon>eudicotyledons</taxon>
        <taxon>Gunneridae</taxon>
        <taxon>Pentapetalae</taxon>
        <taxon>rosids</taxon>
        <taxon>malvids</taxon>
        <taxon>Brassicales</taxon>
        <taxon>Brassicaceae</taxon>
        <taxon>Camelineae</taxon>
        <taxon>Arabidopsis</taxon>
    </lineage>
</organism>